<proteinExistence type="inferred from homology"/>
<accession>A5GLY6</accession>
<feature type="chain" id="PRO_0000322964" description="Recombination protein RecR">
    <location>
        <begin position="1"/>
        <end position="199"/>
    </location>
</feature>
<feature type="domain" description="Toprim" evidence="1">
    <location>
        <begin position="81"/>
        <end position="175"/>
    </location>
</feature>
<feature type="zinc finger region" description="C4-type" evidence="1">
    <location>
        <begin position="58"/>
        <end position="73"/>
    </location>
</feature>
<reference key="1">
    <citation type="submission" date="2006-05" db="EMBL/GenBank/DDBJ databases">
        <authorList>
            <consortium name="Genoscope"/>
        </authorList>
    </citation>
    <scope>NUCLEOTIDE SEQUENCE [LARGE SCALE GENOMIC DNA]</scope>
    <source>
        <strain>WH7803</strain>
    </source>
</reference>
<comment type="function">
    <text evidence="1">May play a role in DNA repair. It seems to be involved in an RecBC-independent recombinational process of DNA repair. It may act with RecF and RecO.</text>
</comment>
<comment type="similarity">
    <text evidence="1">Belongs to the RecR family.</text>
</comment>
<gene>
    <name evidence="1" type="primary">recR</name>
    <name type="ordered locus">SynWH7803_1525</name>
</gene>
<keyword id="KW-0227">DNA damage</keyword>
<keyword id="KW-0233">DNA recombination</keyword>
<keyword id="KW-0234">DNA repair</keyword>
<keyword id="KW-0479">Metal-binding</keyword>
<keyword id="KW-1185">Reference proteome</keyword>
<keyword id="KW-0862">Zinc</keyword>
<keyword id="KW-0863">Zinc-finger</keyword>
<name>RECR_SYNPW</name>
<sequence length="199" mass="21881">MSGFTRPLARLIDQFERLPGIGPRTAQRLALHLLRQPEEQIRSFADALLAARTEVGHCQTCHHLSAEPTCEICRNPERANGQICVVADSRDLLALERTREFSGHYHVLGGLISPMDGIGPDLLQISSLVKRVAANNTEEVILALTPSVEGDTTSLYVARLLKPFTRVSRIAYGLPVGSELEYADDVTLSRALEGRRAVE</sequence>
<dbReference type="EMBL" id="CT971583">
    <property type="protein sequence ID" value="CAK23951.1"/>
    <property type="molecule type" value="Genomic_DNA"/>
</dbReference>
<dbReference type="SMR" id="A5GLY6"/>
<dbReference type="STRING" id="32051.SynWH7803_1525"/>
<dbReference type="KEGG" id="syx:SynWH7803_1525"/>
<dbReference type="eggNOG" id="COG0353">
    <property type="taxonomic scope" value="Bacteria"/>
</dbReference>
<dbReference type="HOGENOM" id="CLU_060739_1_0_3"/>
<dbReference type="Proteomes" id="UP000001566">
    <property type="component" value="Chromosome"/>
</dbReference>
<dbReference type="GO" id="GO:0003677">
    <property type="term" value="F:DNA binding"/>
    <property type="evidence" value="ECO:0007669"/>
    <property type="project" value="UniProtKB-UniRule"/>
</dbReference>
<dbReference type="GO" id="GO:0008270">
    <property type="term" value="F:zinc ion binding"/>
    <property type="evidence" value="ECO:0007669"/>
    <property type="project" value="UniProtKB-KW"/>
</dbReference>
<dbReference type="GO" id="GO:0006310">
    <property type="term" value="P:DNA recombination"/>
    <property type="evidence" value="ECO:0007669"/>
    <property type="project" value="UniProtKB-UniRule"/>
</dbReference>
<dbReference type="GO" id="GO:0006281">
    <property type="term" value="P:DNA repair"/>
    <property type="evidence" value="ECO:0007669"/>
    <property type="project" value="UniProtKB-UniRule"/>
</dbReference>
<dbReference type="CDD" id="cd01025">
    <property type="entry name" value="TOPRIM_recR"/>
    <property type="match status" value="1"/>
</dbReference>
<dbReference type="Gene3D" id="3.40.1360.10">
    <property type="match status" value="1"/>
</dbReference>
<dbReference type="Gene3D" id="6.10.250.240">
    <property type="match status" value="1"/>
</dbReference>
<dbReference type="Gene3D" id="1.10.8.420">
    <property type="entry name" value="RecR Domain 1"/>
    <property type="match status" value="1"/>
</dbReference>
<dbReference type="HAMAP" id="MF_00017">
    <property type="entry name" value="RecR"/>
    <property type="match status" value="1"/>
</dbReference>
<dbReference type="InterPro" id="IPR000093">
    <property type="entry name" value="DNA_Rcmb_RecR"/>
</dbReference>
<dbReference type="InterPro" id="IPR023627">
    <property type="entry name" value="Rcmb_RecR"/>
</dbReference>
<dbReference type="InterPro" id="IPR015967">
    <property type="entry name" value="Rcmb_RecR_Znf"/>
</dbReference>
<dbReference type="InterPro" id="IPR006171">
    <property type="entry name" value="TOPRIM_dom"/>
</dbReference>
<dbReference type="InterPro" id="IPR034137">
    <property type="entry name" value="TOPRIM_RecR"/>
</dbReference>
<dbReference type="NCBIfam" id="TIGR00615">
    <property type="entry name" value="recR"/>
    <property type="match status" value="1"/>
</dbReference>
<dbReference type="PANTHER" id="PTHR30446">
    <property type="entry name" value="RECOMBINATION PROTEIN RECR"/>
    <property type="match status" value="1"/>
</dbReference>
<dbReference type="PANTHER" id="PTHR30446:SF0">
    <property type="entry name" value="RECOMBINATION PROTEIN RECR"/>
    <property type="match status" value="1"/>
</dbReference>
<dbReference type="Pfam" id="PF21175">
    <property type="entry name" value="RecR_C"/>
    <property type="match status" value="1"/>
</dbReference>
<dbReference type="Pfam" id="PF21176">
    <property type="entry name" value="RecR_HhH"/>
    <property type="match status" value="1"/>
</dbReference>
<dbReference type="Pfam" id="PF02132">
    <property type="entry name" value="RecR_ZnF"/>
    <property type="match status" value="1"/>
</dbReference>
<dbReference type="Pfam" id="PF13662">
    <property type="entry name" value="Toprim_4"/>
    <property type="match status" value="1"/>
</dbReference>
<dbReference type="SMART" id="SM00493">
    <property type="entry name" value="TOPRIM"/>
    <property type="match status" value="1"/>
</dbReference>
<dbReference type="SUPFAM" id="SSF111304">
    <property type="entry name" value="Recombination protein RecR"/>
    <property type="match status" value="1"/>
</dbReference>
<dbReference type="PROSITE" id="PS50880">
    <property type="entry name" value="TOPRIM"/>
    <property type="match status" value="1"/>
</dbReference>
<protein>
    <recommendedName>
        <fullName evidence="1">Recombination protein RecR</fullName>
    </recommendedName>
</protein>
<evidence type="ECO:0000255" key="1">
    <source>
        <dbReference type="HAMAP-Rule" id="MF_00017"/>
    </source>
</evidence>
<organism>
    <name type="scientific">Synechococcus sp. (strain WH7803)</name>
    <dbReference type="NCBI Taxonomy" id="32051"/>
    <lineage>
        <taxon>Bacteria</taxon>
        <taxon>Bacillati</taxon>
        <taxon>Cyanobacteriota</taxon>
        <taxon>Cyanophyceae</taxon>
        <taxon>Synechococcales</taxon>
        <taxon>Synechococcaceae</taxon>
        <taxon>Synechococcus</taxon>
    </lineage>
</organism>